<proteinExistence type="inferred from homology"/>
<protein>
    <recommendedName>
        <fullName evidence="1">Glutamyl-tRNA reductase</fullName>
        <shortName evidence="1">GluTR</shortName>
        <ecNumber evidence="1">1.2.1.70</ecNumber>
    </recommendedName>
</protein>
<keyword id="KW-0521">NADP</keyword>
<keyword id="KW-0560">Oxidoreductase</keyword>
<keyword id="KW-0627">Porphyrin biosynthesis</keyword>
<keyword id="KW-1185">Reference proteome</keyword>
<gene>
    <name evidence="1" type="primary">hemA</name>
    <name type="ordered locus">MJ0143</name>
</gene>
<organism>
    <name type="scientific">Methanocaldococcus jannaschii (strain ATCC 43067 / DSM 2661 / JAL-1 / JCM 10045 / NBRC 100440)</name>
    <name type="common">Methanococcus jannaschii</name>
    <dbReference type="NCBI Taxonomy" id="243232"/>
    <lineage>
        <taxon>Archaea</taxon>
        <taxon>Methanobacteriati</taxon>
        <taxon>Methanobacteriota</taxon>
        <taxon>Methanomada group</taxon>
        <taxon>Methanococci</taxon>
        <taxon>Methanococcales</taxon>
        <taxon>Methanocaldococcaceae</taxon>
        <taxon>Methanocaldococcus</taxon>
    </lineage>
</organism>
<reference key="1">
    <citation type="journal article" date="1996" name="Science">
        <title>Complete genome sequence of the methanogenic archaeon, Methanococcus jannaschii.</title>
        <authorList>
            <person name="Bult C.J."/>
            <person name="White O."/>
            <person name="Olsen G.J."/>
            <person name="Zhou L."/>
            <person name="Fleischmann R.D."/>
            <person name="Sutton G.G."/>
            <person name="Blake J.A."/>
            <person name="FitzGerald L.M."/>
            <person name="Clayton R.A."/>
            <person name="Gocayne J.D."/>
            <person name="Kerlavage A.R."/>
            <person name="Dougherty B.A."/>
            <person name="Tomb J.-F."/>
            <person name="Adams M.D."/>
            <person name="Reich C.I."/>
            <person name="Overbeek R."/>
            <person name="Kirkness E.F."/>
            <person name="Weinstock K.G."/>
            <person name="Merrick J.M."/>
            <person name="Glodek A."/>
            <person name="Scott J.L."/>
            <person name="Geoghagen N.S.M."/>
            <person name="Weidman J.F."/>
            <person name="Fuhrmann J.L."/>
            <person name="Nguyen D."/>
            <person name="Utterback T.R."/>
            <person name="Kelley J.M."/>
            <person name="Peterson J.D."/>
            <person name="Sadow P.W."/>
            <person name="Hanna M.C."/>
            <person name="Cotton M.D."/>
            <person name="Roberts K.M."/>
            <person name="Hurst M.A."/>
            <person name="Kaine B.P."/>
            <person name="Borodovsky M."/>
            <person name="Klenk H.-P."/>
            <person name="Fraser C.M."/>
            <person name="Smith H.O."/>
            <person name="Woese C.R."/>
            <person name="Venter J.C."/>
        </authorList>
    </citation>
    <scope>NUCLEOTIDE SEQUENCE [LARGE SCALE GENOMIC DNA]</scope>
    <source>
        <strain>ATCC 43067 / DSM 2661 / JAL-1 / JCM 10045 / NBRC 100440</strain>
    </source>
</reference>
<dbReference type="EC" id="1.2.1.70" evidence="1"/>
<dbReference type="EMBL" id="L77117">
    <property type="protein sequence ID" value="AAB98126.1"/>
    <property type="molecule type" value="Genomic_DNA"/>
</dbReference>
<dbReference type="PIR" id="H64317">
    <property type="entry name" value="H64317"/>
</dbReference>
<dbReference type="RefSeq" id="WP_010869638.1">
    <property type="nucleotide sequence ID" value="NC_000909.1"/>
</dbReference>
<dbReference type="SMR" id="Q60172"/>
<dbReference type="FunCoup" id="Q60172">
    <property type="interactions" value="123"/>
</dbReference>
<dbReference type="STRING" id="243232.MJ_0143"/>
<dbReference type="PaxDb" id="243232-MJ_0143"/>
<dbReference type="EnsemblBacteria" id="AAB98126">
    <property type="protein sequence ID" value="AAB98126"/>
    <property type="gene ID" value="MJ_0143"/>
</dbReference>
<dbReference type="GeneID" id="1450987"/>
<dbReference type="KEGG" id="mja:MJ_0143"/>
<dbReference type="eggNOG" id="arCOG01036">
    <property type="taxonomic scope" value="Archaea"/>
</dbReference>
<dbReference type="HOGENOM" id="CLU_035113_0_0_2"/>
<dbReference type="InParanoid" id="Q60172"/>
<dbReference type="OrthoDB" id="4562at2157"/>
<dbReference type="PhylomeDB" id="Q60172"/>
<dbReference type="UniPathway" id="UPA00251">
    <property type="reaction ID" value="UER00316"/>
</dbReference>
<dbReference type="Proteomes" id="UP000000805">
    <property type="component" value="Chromosome"/>
</dbReference>
<dbReference type="GO" id="GO:0008883">
    <property type="term" value="F:glutamyl-tRNA reductase activity"/>
    <property type="evidence" value="ECO:0000318"/>
    <property type="project" value="GO_Central"/>
</dbReference>
<dbReference type="GO" id="GO:0050661">
    <property type="term" value="F:NADP binding"/>
    <property type="evidence" value="ECO:0007669"/>
    <property type="project" value="InterPro"/>
</dbReference>
<dbReference type="GO" id="GO:0019353">
    <property type="term" value="P:protoporphyrinogen IX biosynthetic process from glutamate"/>
    <property type="evidence" value="ECO:0000318"/>
    <property type="project" value="GO_Central"/>
</dbReference>
<dbReference type="CDD" id="cd05213">
    <property type="entry name" value="NAD_bind_Glutamyl_tRNA_reduct"/>
    <property type="match status" value="1"/>
</dbReference>
<dbReference type="FunFam" id="3.40.50.720:FF:000031">
    <property type="entry name" value="Glutamyl-tRNA reductase"/>
    <property type="match status" value="1"/>
</dbReference>
<dbReference type="Gene3D" id="3.30.460.30">
    <property type="entry name" value="Glutamyl-tRNA reductase, N-terminal domain"/>
    <property type="match status" value="1"/>
</dbReference>
<dbReference type="Gene3D" id="3.40.50.720">
    <property type="entry name" value="NAD(P)-binding Rossmann-like Domain"/>
    <property type="match status" value="1"/>
</dbReference>
<dbReference type="HAMAP" id="MF_00087">
    <property type="entry name" value="Glu_tRNA_reductase"/>
    <property type="match status" value="1"/>
</dbReference>
<dbReference type="InterPro" id="IPR000343">
    <property type="entry name" value="4pyrrol_synth_GluRdtase"/>
</dbReference>
<dbReference type="InterPro" id="IPR015896">
    <property type="entry name" value="4pyrrol_synth_GluRdtase_dimer"/>
</dbReference>
<dbReference type="InterPro" id="IPR015895">
    <property type="entry name" value="4pyrrol_synth_GluRdtase_N"/>
</dbReference>
<dbReference type="InterPro" id="IPR018214">
    <property type="entry name" value="GluRdtase_CS"/>
</dbReference>
<dbReference type="InterPro" id="IPR036453">
    <property type="entry name" value="GluRdtase_dimer_dom_sf"/>
</dbReference>
<dbReference type="InterPro" id="IPR036343">
    <property type="entry name" value="GluRdtase_N_sf"/>
</dbReference>
<dbReference type="InterPro" id="IPR036291">
    <property type="entry name" value="NAD(P)-bd_dom_sf"/>
</dbReference>
<dbReference type="InterPro" id="IPR006151">
    <property type="entry name" value="Shikm_DH/Glu-tRNA_Rdtase"/>
</dbReference>
<dbReference type="NCBIfam" id="TIGR01035">
    <property type="entry name" value="hemA"/>
    <property type="match status" value="1"/>
</dbReference>
<dbReference type="PANTHER" id="PTHR43013">
    <property type="entry name" value="GLUTAMYL-TRNA REDUCTASE"/>
    <property type="match status" value="1"/>
</dbReference>
<dbReference type="PANTHER" id="PTHR43013:SF1">
    <property type="entry name" value="GLUTAMYL-TRNA REDUCTASE"/>
    <property type="match status" value="1"/>
</dbReference>
<dbReference type="Pfam" id="PF00745">
    <property type="entry name" value="GlutR_dimer"/>
    <property type="match status" value="1"/>
</dbReference>
<dbReference type="Pfam" id="PF05201">
    <property type="entry name" value="GlutR_N"/>
    <property type="match status" value="1"/>
</dbReference>
<dbReference type="Pfam" id="PF01488">
    <property type="entry name" value="Shikimate_DH"/>
    <property type="match status" value="1"/>
</dbReference>
<dbReference type="PIRSF" id="PIRSF000445">
    <property type="entry name" value="4pyrrol_synth_GluRdtase"/>
    <property type="match status" value="1"/>
</dbReference>
<dbReference type="SUPFAM" id="SSF69742">
    <property type="entry name" value="Glutamyl tRNA-reductase catalytic, N-terminal domain"/>
    <property type="match status" value="1"/>
</dbReference>
<dbReference type="SUPFAM" id="SSF69075">
    <property type="entry name" value="Glutamyl tRNA-reductase dimerization domain"/>
    <property type="match status" value="1"/>
</dbReference>
<dbReference type="SUPFAM" id="SSF51735">
    <property type="entry name" value="NAD(P)-binding Rossmann-fold domains"/>
    <property type="match status" value="1"/>
</dbReference>
<dbReference type="PROSITE" id="PS00747">
    <property type="entry name" value="GLUTR"/>
    <property type="match status" value="1"/>
</dbReference>
<sequence length="392" mass="44847">MIILKADYKKYNVSELEKLRMDEEKFYETFDNAILLQTCNRVEIIFDADSLEEIKGIENIDLEKFDILFGDKAIEHLFRVACGLESMIVGEDQILGQLKNAYLKAKEKGRISKKLEKIILKAIHTGQRARVETKINEGGVSIGSAAVELAEKIFGLEGKNVLLIGAGEMANLVIKALKEKNIKAIIVANRTYEKAEKLAKELGGMAIKFDKLEEALRYADIVISATGAPHPILNKERLKNAGKTIIIDIANPRDTTDDIRELPDIFLFTIDDLRLVAEENLKKRKEEIPKVEMIICEELERLKEFLDKMRFETAIKELGQYIENVRKKEVEKAKKILKNKNKPVEEVLEDFSKALCKRIIYDIIKIFENVEDKEVFECLAKEFKKLGNKNKN</sequence>
<accession>Q60172</accession>
<comment type="function">
    <text evidence="1">Catalyzes the NADPH-dependent reduction of glutamyl-tRNA(Glu) to glutamate 1-semialdehyde (GSA).</text>
</comment>
<comment type="catalytic activity">
    <reaction evidence="1">
        <text>(S)-4-amino-5-oxopentanoate + tRNA(Glu) + NADP(+) = L-glutamyl-tRNA(Glu) + NADPH + H(+)</text>
        <dbReference type="Rhea" id="RHEA:12344"/>
        <dbReference type="Rhea" id="RHEA-COMP:9663"/>
        <dbReference type="Rhea" id="RHEA-COMP:9680"/>
        <dbReference type="ChEBI" id="CHEBI:15378"/>
        <dbReference type="ChEBI" id="CHEBI:57501"/>
        <dbReference type="ChEBI" id="CHEBI:57783"/>
        <dbReference type="ChEBI" id="CHEBI:58349"/>
        <dbReference type="ChEBI" id="CHEBI:78442"/>
        <dbReference type="ChEBI" id="CHEBI:78520"/>
        <dbReference type="EC" id="1.2.1.70"/>
    </reaction>
</comment>
<comment type="pathway">
    <text evidence="1">Porphyrin-containing compound metabolism; protoporphyrin-IX biosynthesis; 5-aminolevulinate from L-glutamyl-tRNA(Glu): step 1/2.</text>
</comment>
<comment type="subunit">
    <text evidence="1">Homodimer.</text>
</comment>
<comment type="domain">
    <text evidence="1">Possesses an unusual extended V-shaped dimeric structure with each monomer consisting of three distinct domains arranged along a curved 'spinal' alpha-helix. The N-terminal catalytic domain specifically recognizes the glutamate moiety of the substrate. The second domain is the NADPH-binding domain, and the third C-terminal domain is responsible for dimerization.</text>
</comment>
<comment type="miscellaneous">
    <text evidence="1">During catalysis, the active site Cys acts as a nucleophile attacking the alpha-carbonyl group of tRNA-bound glutamate with the formation of a thioester intermediate between enzyme and glutamate, and the concomitant release of tRNA(Glu). The thioester intermediate is finally reduced by direct hydride transfer from NADPH, to form the product GSA.</text>
</comment>
<comment type="similarity">
    <text evidence="1">Belongs to the glutamyl-tRNA reductase family.</text>
</comment>
<evidence type="ECO:0000255" key="1">
    <source>
        <dbReference type="HAMAP-Rule" id="MF_00087"/>
    </source>
</evidence>
<feature type="chain" id="PRO_0000114101" description="Glutamyl-tRNA reductase">
    <location>
        <begin position="1"/>
        <end position="392"/>
    </location>
</feature>
<feature type="active site" description="Nucleophile" evidence="1">
    <location>
        <position position="39"/>
    </location>
</feature>
<feature type="binding site" evidence="1">
    <location>
        <begin position="38"/>
        <end position="41"/>
    </location>
    <ligand>
        <name>substrate</name>
    </ligand>
</feature>
<feature type="binding site" evidence="1">
    <location>
        <position position="86"/>
    </location>
    <ligand>
        <name>substrate</name>
    </ligand>
</feature>
<feature type="binding site" evidence="1">
    <location>
        <begin position="91"/>
        <end position="93"/>
    </location>
    <ligand>
        <name>substrate</name>
    </ligand>
</feature>
<feature type="binding site" evidence="1">
    <location>
        <position position="97"/>
    </location>
    <ligand>
        <name>substrate</name>
    </ligand>
</feature>
<feature type="binding site" evidence="1">
    <location>
        <begin position="165"/>
        <end position="170"/>
    </location>
    <ligand>
        <name>NADP(+)</name>
        <dbReference type="ChEBI" id="CHEBI:58349"/>
    </ligand>
</feature>
<feature type="site" description="Important for activity" evidence="1">
    <location>
        <position position="76"/>
    </location>
</feature>
<name>HEM1_METJA</name>